<gene>
    <name type="ORF">7b</name>
</gene>
<sequence>MKFVILVLCLSFVNGYGIKRNVQEHDLKDSHEHPTMTWELLEKFVGNTLYITTPQVLALPLGAQIYCDEIEGFQCSWPGYKNYAHDHTDFHFNPSNPFYSFVDTFYVSLGDSADKIYLRVISATSREKMLNIGCHTSFSVNLPIGTQIYHDKDMKLLVEGRHLECAHRIYFVKYCPYHTHGYCFDDKLKVYDLKRVKSRKDFEKISQYQKSEL</sequence>
<dbReference type="EMBL" id="D13096">
    <property type="protein sequence ID" value="BAA02416.1"/>
    <property type="molecule type" value="Genomic_RNA"/>
</dbReference>
<dbReference type="PIR" id="JQ1727">
    <property type="entry name" value="JQ1727"/>
</dbReference>
<dbReference type="InterPro" id="IPR004945">
    <property type="entry name" value="Corona_6B_7B"/>
</dbReference>
<dbReference type="Pfam" id="PF03262">
    <property type="entry name" value="Corona_6B_7B"/>
    <property type="match status" value="1"/>
</dbReference>
<feature type="signal peptide" evidence="1">
    <location>
        <begin position="1"/>
        <end position="15"/>
    </location>
</feature>
<feature type="chain" id="PRO_0000106107" description="Non-structural protein 7b">
    <location>
        <begin position="16"/>
        <end position="213"/>
    </location>
</feature>
<proteinExistence type="inferred from homology"/>
<accession>P36302</accession>
<name>NS7B_CVCAI</name>
<reference key="1">
    <citation type="journal article" date="1992" name="J. Gen. Virol.">
        <title>Analysis of a 9.6 kb sequence from the 3' end of canine coronavirus genomic RNA.</title>
        <authorList>
            <person name="Horsburgh B.C."/>
            <person name="Brierley I."/>
            <person name="Brown T.D.K."/>
        </authorList>
    </citation>
    <scope>NUCLEOTIDE SEQUENCE [GENOMIC RNA]</scope>
</reference>
<organismHost>
    <name type="scientific">Canis lupus familiaris</name>
    <name type="common">Dog</name>
    <name type="synonym">Canis familiaris</name>
    <dbReference type="NCBI Taxonomy" id="9615"/>
</organismHost>
<organism>
    <name type="scientific">Canine coronavirus (strain Insavc-1)</name>
    <name type="common">CCoV</name>
    <name type="synonym">Canine enteric coronavirus</name>
    <dbReference type="NCBI Taxonomy" id="36391"/>
    <lineage>
        <taxon>Viruses</taxon>
        <taxon>Riboviria</taxon>
        <taxon>Orthornavirae</taxon>
        <taxon>Pisuviricota</taxon>
        <taxon>Pisoniviricetes</taxon>
        <taxon>Nidovirales</taxon>
        <taxon>Cornidovirineae</taxon>
        <taxon>Coronaviridae</taxon>
        <taxon>Orthocoronavirinae</taxon>
        <taxon>Alphacoronavirus</taxon>
        <taxon>Tegacovirus</taxon>
        <taxon>Alphacoronavirus 1</taxon>
    </lineage>
</organism>
<evidence type="ECO:0000255" key="1"/>
<keyword id="KW-0732">Signal</keyword>
<protein>
    <recommendedName>
        <fullName>Non-structural protein 7b</fullName>
        <shortName>ns7b</shortName>
    </recommendedName>
    <alternativeName>
        <fullName>Accessory protein 7b</fullName>
    </alternativeName>
</protein>